<feature type="chain" id="PRO_0000377760" description="Uncharacterized protein 004R">
    <location>
        <begin position="1"/>
        <end position="451"/>
    </location>
</feature>
<feature type="transmembrane region" description="Helical" evidence="1">
    <location>
        <begin position="358"/>
        <end position="376"/>
    </location>
</feature>
<feature type="region of interest" description="Disordered" evidence="2">
    <location>
        <begin position="89"/>
        <end position="150"/>
    </location>
</feature>
<feature type="region of interest" description="Disordered" evidence="2">
    <location>
        <begin position="164"/>
        <end position="222"/>
    </location>
</feature>
<feature type="region of interest" description="Disordered" evidence="2">
    <location>
        <begin position="401"/>
        <end position="451"/>
    </location>
</feature>
<feature type="compositionally biased region" description="Polar residues" evidence="2">
    <location>
        <begin position="104"/>
        <end position="121"/>
    </location>
</feature>
<feature type="compositionally biased region" description="Low complexity" evidence="2">
    <location>
        <begin position="137"/>
        <end position="147"/>
    </location>
</feature>
<feature type="compositionally biased region" description="Basic and acidic residues" evidence="2">
    <location>
        <begin position="175"/>
        <end position="222"/>
    </location>
</feature>
<feature type="compositionally biased region" description="Low complexity" evidence="2">
    <location>
        <begin position="403"/>
        <end position="414"/>
    </location>
</feature>
<evidence type="ECO:0000255" key="1"/>
<evidence type="ECO:0000256" key="2">
    <source>
        <dbReference type="SAM" id="MobiDB-lite"/>
    </source>
</evidence>
<evidence type="ECO:0000305" key="3"/>
<gene>
    <name type="ORF">IIV3-004R</name>
</gene>
<name>VF067_IIV3</name>
<organism>
    <name type="scientific">Invertebrate iridescent virus 3</name>
    <name type="common">IIV-3</name>
    <name type="synonym">Mosquito iridescent virus</name>
    <dbReference type="NCBI Taxonomy" id="345201"/>
    <lineage>
        <taxon>Viruses</taxon>
        <taxon>Varidnaviria</taxon>
        <taxon>Bamfordvirae</taxon>
        <taxon>Nucleocytoviricota</taxon>
        <taxon>Megaviricetes</taxon>
        <taxon>Pimascovirales</taxon>
        <taxon>Iridoviridae</taxon>
        <taxon>Betairidovirinae</taxon>
        <taxon>Chloriridovirus</taxon>
    </lineage>
</organism>
<proteinExistence type="inferred from homology"/>
<comment type="subcellular location">
    <subcellularLocation>
        <location evidence="3">Membrane</location>
        <topology evidence="3">Single-pass membrane protein</topology>
    </subcellularLocation>
</comment>
<comment type="similarity">
    <text evidence="3">Belongs to the IIV-6 067R family.</text>
</comment>
<organismHost>
    <name type="scientific">Aedes vexans</name>
    <name type="common">Inland floodwater mosquito</name>
    <name type="synonym">Culex vexans</name>
    <dbReference type="NCBI Taxonomy" id="7163"/>
</organismHost>
<organismHost>
    <name type="scientific">Culex territans</name>
    <dbReference type="NCBI Taxonomy" id="42431"/>
</organismHost>
<organismHost>
    <name type="scientific">Culiseta annulata</name>
    <dbReference type="NCBI Taxonomy" id="332058"/>
</organismHost>
<organismHost>
    <name type="scientific">Ochlerotatus sollicitans</name>
    <name type="common">eastern saltmarsh mosquito</name>
    <dbReference type="NCBI Taxonomy" id="310513"/>
</organismHost>
<organismHost>
    <name type="scientific">Ochlerotatus taeniorhynchus</name>
    <name type="common">Black salt marsh mosquito</name>
    <name type="synonym">Aedes taeniorhynchus</name>
    <dbReference type="NCBI Taxonomy" id="329105"/>
</organismHost>
<organismHost>
    <name type="scientific">Psorophora ferox</name>
    <dbReference type="NCBI Taxonomy" id="7183"/>
</organismHost>
<protein>
    <recommendedName>
        <fullName>Uncharacterized protein 004R</fullName>
    </recommendedName>
</protein>
<accession>Q197F6</accession>
<keyword id="KW-0472">Membrane</keyword>
<keyword id="KW-1185">Reference proteome</keyword>
<keyword id="KW-0812">Transmembrane</keyword>
<keyword id="KW-1133">Transmembrane helix</keyword>
<sequence length="451" mass="51330">MPPKNNQITYNIFKVDHRFALPRVRPKFPKFSELYLELLVNRSKVDPQLMNEPYVHRYDPVVSSGESMVNPVPPADDGRMVATTLKAVPRLSSVPNPSPAKPTQKPTISRESFVWESSASIDPSPRVQKKSRGRPASSTPSIEPESISRYRQVKRSIISSYYKQVGEGAPSTTRRAADSENERRPSEVREAPESRRRRETSETGSDKSKAPPPIKEIKKTFGNEENPLINVFEDYPQAKDEDDHKRELLFKFKRLRQTYPKVDIPDFTMLSNHETMKRTYDSTLRNLSIDSTVENYKSYLMMGFMACEMVLGKIGFDMEGYTQQQTLHMNKYEKLLVELGEKSYVPNSVNKWPVEVRLIGLMLFQTTIFIISKIIAKKTNVNLLQIYNNFSGLNEPPKVTRNGSSSGFASGTSSPLVFIPRTKRPSLVPSEKKMRGPSVTRDLAAEQERDA</sequence>
<dbReference type="EMBL" id="DQ643392">
    <property type="protein sequence ID" value="ABF82034.1"/>
    <property type="molecule type" value="Genomic_DNA"/>
</dbReference>
<dbReference type="RefSeq" id="YP_654576.1">
    <property type="nucleotide sequence ID" value="NC_008187.1"/>
</dbReference>
<dbReference type="KEGG" id="vg:4156253"/>
<dbReference type="OrthoDB" id="10549at10239"/>
<dbReference type="Proteomes" id="UP000001358">
    <property type="component" value="Genome"/>
</dbReference>
<dbReference type="GO" id="GO:0016020">
    <property type="term" value="C:membrane"/>
    <property type="evidence" value="ECO:0007669"/>
    <property type="project" value="UniProtKB-SubCell"/>
</dbReference>
<reference key="1">
    <citation type="journal article" date="2006" name="J. Virol.">
        <title>Genome of invertebrate iridescent virus type 3 (mosquito iridescent virus).</title>
        <authorList>
            <person name="Delhon G."/>
            <person name="Tulman E.R."/>
            <person name="Afonso C.L."/>
            <person name="Lu Z."/>
            <person name="Becnel J.J."/>
            <person name="Moser B.A."/>
            <person name="Kutish G.F."/>
            <person name="Rock D.L."/>
        </authorList>
    </citation>
    <scope>NUCLEOTIDE SEQUENCE [LARGE SCALE GENOMIC DNA]</scope>
</reference>